<feature type="chain" id="PRO_0000177421" description="Large ribosomal subunit protein bL35">
    <location>
        <begin position="1"/>
        <end position="66"/>
    </location>
</feature>
<feature type="region of interest" description="Disordered" evidence="2">
    <location>
        <begin position="1"/>
        <end position="49"/>
    </location>
</feature>
<feature type="compositionally biased region" description="Basic residues" evidence="2">
    <location>
        <begin position="1"/>
        <end position="16"/>
    </location>
</feature>
<feature type="compositionally biased region" description="Basic residues" evidence="2">
    <location>
        <begin position="38"/>
        <end position="49"/>
    </location>
</feature>
<organism>
    <name type="scientific">Staphylococcus aureus (strain MSSA476)</name>
    <dbReference type="NCBI Taxonomy" id="282459"/>
    <lineage>
        <taxon>Bacteria</taxon>
        <taxon>Bacillati</taxon>
        <taxon>Bacillota</taxon>
        <taxon>Bacilli</taxon>
        <taxon>Bacillales</taxon>
        <taxon>Staphylococcaceae</taxon>
        <taxon>Staphylococcus</taxon>
    </lineage>
</organism>
<dbReference type="EMBL" id="BX571857">
    <property type="protein sequence ID" value="CAG43410.1"/>
    <property type="molecule type" value="Genomic_DNA"/>
</dbReference>
<dbReference type="RefSeq" id="WP_001125540.1">
    <property type="nucleotide sequence ID" value="NC_002953.3"/>
</dbReference>
<dbReference type="SMR" id="Q6G8P6"/>
<dbReference type="GeneID" id="98346041"/>
<dbReference type="KEGG" id="sas:SAS1608"/>
<dbReference type="HOGENOM" id="CLU_169643_3_0_9"/>
<dbReference type="GO" id="GO:0022625">
    <property type="term" value="C:cytosolic large ribosomal subunit"/>
    <property type="evidence" value="ECO:0007669"/>
    <property type="project" value="TreeGrafter"/>
</dbReference>
<dbReference type="GO" id="GO:0003735">
    <property type="term" value="F:structural constituent of ribosome"/>
    <property type="evidence" value="ECO:0007669"/>
    <property type="project" value="InterPro"/>
</dbReference>
<dbReference type="GO" id="GO:0006412">
    <property type="term" value="P:translation"/>
    <property type="evidence" value="ECO:0007669"/>
    <property type="project" value="UniProtKB-UniRule"/>
</dbReference>
<dbReference type="FunFam" id="4.10.410.60:FF:000001">
    <property type="entry name" value="50S ribosomal protein L35"/>
    <property type="match status" value="1"/>
</dbReference>
<dbReference type="Gene3D" id="4.10.410.60">
    <property type="match status" value="1"/>
</dbReference>
<dbReference type="HAMAP" id="MF_00514">
    <property type="entry name" value="Ribosomal_bL35"/>
    <property type="match status" value="1"/>
</dbReference>
<dbReference type="InterPro" id="IPR001706">
    <property type="entry name" value="Ribosomal_bL35"/>
</dbReference>
<dbReference type="InterPro" id="IPR021137">
    <property type="entry name" value="Ribosomal_bL35-like"/>
</dbReference>
<dbReference type="InterPro" id="IPR018265">
    <property type="entry name" value="Ribosomal_bL35_CS"/>
</dbReference>
<dbReference type="InterPro" id="IPR037229">
    <property type="entry name" value="Ribosomal_bL35_sf"/>
</dbReference>
<dbReference type="NCBIfam" id="TIGR00001">
    <property type="entry name" value="rpmI_bact"/>
    <property type="match status" value="1"/>
</dbReference>
<dbReference type="PANTHER" id="PTHR33343">
    <property type="entry name" value="54S RIBOSOMAL PROTEIN BL35M"/>
    <property type="match status" value="1"/>
</dbReference>
<dbReference type="PANTHER" id="PTHR33343:SF1">
    <property type="entry name" value="LARGE RIBOSOMAL SUBUNIT PROTEIN BL35M"/>
    <property type="match status" value="1"/>
</dbReference>
<dbReference type="Pfam" id="PF01632">
    <property type="entry name" value="Ribosomal_L35p"/>
    <property type="match status" value="1"/>
</dbReference>
<dbReference type="PRINTS" id="PR00064">
    <property type="entry name" value="RIBOSOMALL35"/>
</dbReference>
<dbReference type="SUPFAM" id="SSF143034">
    <property type="entry name" value="L35p-like"/>
    <property type="match status" value="1"/>
</dbReference>
<dbReference type="PROSITE" id="PS00936">
    <property type="entry name" value="RIBOSOMAL_L35"/>
    <property type="match status" value="1"/>
</dbReference>
<name>RL35_STAAS</name>
<reference key="1">
    <citation type="journal article" date="2004" name="Proc. Natl. Acad. Sci. U.S.A.">
        <title>Complete genomes of two clinical Staphylococcus aureus strains: evidence for the rapid evolution of virulence and drug resistance.</title>
        <authorList>
            <person name="Holden M.T.G."/>
            <person name="Feil E.J."/>
            <person name="Lindsay J.A."/>
            <person name="Peacock S.J."/>
            <person name="Day N.P.J."/>
            <person name="Enright M.C."/>
            <person name="Foster T.J."/>
            <person name="Moore C.E."/>
            <person name="Hurst L."/>
            <person name="Atkin R."/>
            <person name="Barron A."/>
            <person name="Bason N."/>
            <person name="Bentley S.D."/>
            <person name="Chillingworth C."/>
            <person name="Chillingworth T."/>
            <person name="Churcher C."/>
            <person name="Clark L."/>
            <person name="Corton C."/>
            <person name="Cronin A."/>
            <person name="Doggett J."/>
            <person name="Dowd L."/>
            <person name="Feltwell T."/>
            <person name="Hance Z."/>
            <person name="Harris B."/>
            <person name="Hauser H."/>
            <person name="Holroyd S."/>
            <person name="Jagels K."/>
            <person name="James K.D."/>
            <person name="Lennard N."/>
            <person name="Line A."/>
            <person name="Mayes R."/>
            <person name="Moule S."/>
            <person name="Mungall K."/>
            <person name="Ormond D."/>
            <person name="Quail M.A."/>
            <person name="Rabbinowitsch E."/>
            <person name="Rutherford K.M."/>
            <person name="Sanders M."/>
            <person name="Sharp S."/>
            <person name="Simmonds M."/>
            <person name="Stevens K."/>
            <person name="Whitehead S."/>
            <person name="Barrell B.G."/>
            <person name="Spratt B.G."/>
            <person name="Parkhill J."/>
        </authorList>
    </citation>
    <scope>NUCLEOTIDE SEQUENCE [LARGE SCALE GENOMIC DNA]</scope>
    <source>
        <strain>MSSA476</strain>
    </source>
</reference>
<gene>
    <name evidence="1" type="primary">rpmI</name>
    <name type="ordered locus">SAS1608</name>
</gene>
<protein>
    <recommendedName>
        <fullName evidence="1">Large ribosomal subunit protein bL35</fullName>
    </recommendedName>
    <alternativeName>
        <fullName evidence="3">50S ribosomal protein L35</fullName>
    </alternativeName>
</protein>
<proteinExistence type="inferred from homology"/>
<keyword id="KW-0687">Ribonucleoprotein</keyword>
<keyword id="KW-0689">Ribosomal protein</keyword>
<sequence length="66" mass="7697">MPKMKTHRGAAKRVKRTASGQLKRSRAFTSHLFANKSTKQKRQLRKARLVSKSDMKRVKQLLAYKK</sequence>
<comment type="similarity">
    <text evidence="1">Belongs to the bacterial ribosomal protein bL35 family.</text>
</comment>
<evidence type="ECO:0000255" key="1">
    <source>
        <dbReference type="HAMAP-Rule" id="MF_00514"/>
    </source>
</evidence>
<evidence type="ECO:0000256" key="2">
    <source>
        <dbReference type="SAM" id="MobiDB-lite"/>
    </source>
</evidence>
<evidence type="ECO:0000305" key="3"/>
<accession>Q6G8P6</accession>